<sequence length="479" mass="54672">MNLPQNIRYRRYQDWTEEEIKSIKTNVALSPWHTTYHIEPKTGLLNDPNGFSYFNGKFNLFYQNWPFGAAHGLKSWIHTESEDLVHFKETGTVLYPDTSHDSHGAYSGSAYEIGDQLFLFYTGNVRDENWVRHPLQIGAFMDKKGNIQKFTDVLIKQPNDVTEHFRDPQIFNYKGQFYAIVGAQSLDKKGFIKLYKAVDNDIKNWQEVGNLDFGGSKSEYMIECPNLVFINEQPVLIYSPQGLSKSELDYHNIYPNTYKVCQSFDTEKPALVDASEIQNLDFGFECYATQAFNAPDGRVYAVSWIGLPDIDYPSDSYDYQGALSLVKELSLKHGKLYQYPVEAVRSLRSEKEAVTYKPETNNTYELELTFDSSSVNELLLFADNKGNGLAITVDTKMGTILIDRSKAGEQYALEFGSQRSCSIQAKETVVNIFVDKSIFEIFINKGEKVFTGRVFPNDKQTGIVIKSGKPSGNYYELKY</sequence>
<dbReference type="EC" id="3.2.1.26"/>
<dbReference type="EMBL" id="M36849">
    <property type="protein sequence ID" value="AAA26972.1"/>
    <property type="molecule type" value="Genomic_DNA"/>
</dbReference>
<dbReference type="EMBL" id="X51507">
    <property type="protein sequence ID" value="CAA35872.1"/>
    <property type="molecule type" value="Genomic_DNA"/>
</dbReference>
<dbReference type="EMBL" id="AE014133">
    <property type="protein sequence ID" value="AAN59465.1"/>
    <property type="molecule type" value="Genomic_DNA"/>
</dbReference>
<dbReference type="EMBL" id="M22711">
    <property type="protein sequence ID" value="AAA26970.2"/>
    <property type="molecule type" value="Genomic_DNA"/>
</dbReference>
<dbReference type="PIR" id="A43501">
    <property type="entry name" value="A43501"/>
</dbReference>
<dbReference type="RefSeq" id="NP_722159.1">
    <property type="nucleotide sequence ID" value="NC_004350.2"/>
</dbReference>
<dbReference type="RefSeq" id="WP_002262658.1">
    <property type="nucleotide sequence ID" value="NC_004350.2"/>
</dbReference>
<dbReference type="SMR" id="P13522"/>
<dbReference type="STRING" id="210007.SMU_1843"/>
<dbReference type="CAZy" id="GH32">
    <property type="family name" value="Glycoside Hydrolase Family 32"/>
</dbReference>
<dbReference type="KEGG" id="smu:SMU_1843"/>
<dbReference type="PATRIC" id="fig|210007.7.peg.1645"/>
<dbReference type="eggNOG" id="COG1621">
    <property type="taxonomic scope" value="Bacteria"/>
</dbReference>
<dbReference type="HOGENOM" id="CLU_001528_7_1_9"/>
<dbReference type="OrthoDB" id="9759709at2"/>
<dbReference type="PhylomeDB" id="P13522"/>
<dbReference type="BRENDA" id="3.2.1.B3">
    <property type="organism ID" value="5941"/>
</dbReference>
<dbReference type="SABIO-RK" id="P13522"/>
<dbReference type="UniPathway" id="UPA00238"/>
<dbReference type="Proteomes" id="UP000002512">
    <property type="component" value="Chromosome"/>
</dbReference>
<dbReference type="GO" id="GO:0005737">
    <property type="term" value="C:cytoplasm"/>
    <property type="evidence" value="ECO:0007669"/>
    <property type="project" value="UniProtKB-SubCell"/>
</dbReference>
<dbReference type="GO" id="GO:0004564">
    <property type="term" value="F:beta-fructofuranosidase activity"/>
    <property type="evidence" value="ECO:0007669"/>
    <property type="project" value="UniProtKB-EC"/>
</dbReference>
<dbReference type="GO" id="GO:0005985">
    <property type="term" value="P:sucrose metabolic process"/>
    <property type="evidence" value="ECO:0007669"/>
    <property type="project" value="UniProtKB-UniPathway"/>
</dbReference>
<dbReference type="CDD" id="cd18623">
    <property type="entry name" value="GH32_ScrB-like"/>
    <property type="match status" value="1"/>
</dbReference>
<dbReference type="Gene3D" id="2.60.120.560">
    <property type="entry name" value="Exo-inulinase, domain 1"/>
    <property type="match status" value="1"/>
</dbReference>
<dbReference type="Gene3D" id="2.115.10.20">
    <property type="entry name" value="Glycosyl hydrolase domain, family 43"/>
    <property type="match status" value="1"/>
</dbReference>
<dbReference type="InterPro" id="IPR013320">
    <property type="entry name" value="ConA-like_dom_sf"/>
</dbReference>
<dbReference type="InterPro" id="IPR051214">
    <property type="entry name" value="GH32_Enzymes"/>
</dbReference>
<dbReference type="InterPro" id="IPR001362">
    <property type="entry name" value="Glyco_hydro_32"/>
</dbReference>
<dbReference type="InterPro" id="IPR018053">
    <property type="entry name" value="Glyco_hydro_32_AS"/>
</dbReference>
<dbReference type="InterPro" id="IPR013189">
    <property type="entry name" value="Glyco_hydro_32_C"/>
</dbReference>
<dbReference type="InterPro" id="IPR013148">
    <property type="entry name" value="Glyco_hydro_32_N"/>
</dbReference>
<dbReference type="InterPro" id="IPR023296">
    <property type="entry name" value="Glyco_hydro_beta-prop_sf"/>
</dbReference>
<dbReference type="InterPro" id="IPR006232">
    <property type="entry name" value="Suc6P_hydrolase"/>
</dbReference>
<dbReference type="NCBIfam" id="TIGR01322">
    <property type="entry name" value="scrB_fam"/>
    <property type="match status" value="1"/>
</dbReference>
<dbReference type="PANTHER" id="PTHR43101">
    <property type="entry name" value="BETA-FRUCTOSIDASE"/>
    <property type="match status" value="1"/>
</dbReference>
<dbReference type="PANTHER" id="PTHR43101:SF1">
    <property type="entry name" value="BETA-FRUCTOSIDASE"/>
    <property type="match status" value="1"/>
</dbReference>
<dbReference type="Pfam" id="PF08244">
    <property type="entry name" value="Glyco_hydro_32C"/>
    <property type="match status" value="1"/>
</dbReference>
<dbReference type="Pfam" id="PF00251">
    <property type="entry name" value="Glyco_hydro_32N"/>
    <property type="match status" value="1"/>
</dbReference>
<dbReference type="SMART" id="SM00640">
    <property type="entry name" value="Glyco_32"/>
    <property type="match status" value="1"/>
</dbReference>
<dbReference type="SUPFAM" id="SSF75005">
    <property type="entry name" value="Arabinanase/levansucrase/invertase"/>
    <property type="match status" value="1"/>
</dbReference>
<dbReference type="SUPFAM" id="SSF49899">
    <property type="entry name" value="Concanavalin A-like lectins/glucanases"/>
    <property type="match status" value="1"/>
</dbReference>
<dbReference type="PROSITE" id="PS00609">
    <property type="entry name" value="GLYCOSYL_HYDROL_F32"/>
    <property type="match status" value="1"/>
</dbReference>
<organism>
    <name type="scientific">Streptococcus mutans serotype c (strain ATCC 700610 / UA159)</name>
    <dbReference type="NCBI Taxonomy" id="210007"/>
    <lineage>
        <taxon>Bacteria</taxon>
        <taxon>Bacillati</taxon>
        <taxon>Bacillota</taxon>
        <taxon>Bacilli</taxon>
        <taxon>Lactobacillales</taxon>
        <taxon>Streptococcaceae</taxon>
        <taxon>Streptococcus</taxon>
    </lineage>
</organism>
<feature type="chain" id="PRO_0000169876" description="Sucrose-6-phosphate hydrolase">
    <location>
        <begin position="1"/>
        <end position="479"/>
    </location>
</feature>
<feature type="active site" evidence="2">
    <location>
        <position position="47"/>
    </location>
</feature>
<feature type="binding site" evidence="1">
    <location>
        <begin position="44"/>
        <end position="47"/>
    </location>
    <ligand>
        <name>substrate</name>
    </ligand>
</feature>
<feature type="binding site" evidence="1">
    <location>
        <position position="63"/>
    </location>
    <ligand>
        <name>substrate</name>
    </ligand>
</feature>
<feature type="binding site" evidence="1">
    <location>
        <begin position="106"/>
        <end position="107"/>
    </location>
    <ligand>
        <name>substrate</name>
    </ligand>
</feature>
<feature type="binding site" evidence="1">
    <location>
        <begin position="166"/>
        <end position="167"/>
    </location>
    <ligand>
        <name>substrate</name>
    </ligand>
</feature>
<feature type="binding site" evidence="1">
    <location>
        <position position="223"/>
    </location>
    <ligand>
        <name>substrate</name>
    </ligand>
</feature>
<feature type="sequence conflict" description="In Ref. 1." evidence="3" ref="1">
    <location>
        <begin position="188"/>
        <end position="212"/>
    </location>
</feature>
<comment type="catalytic activity">
    <reaction evidence="2">
        <text>Hydrolysis of terminal non-reducing beta-D-fructofuranoside residues in beta-D-fructofuranosides.</text>
        <dbReference type="EC" id="3.2.1.26"/>
    </reaction>
</comment>
<comment type="pathway">
    <text>Glycan biosynthesis; sucrose metabolism.</text>
</comment>
<comment type="subcellular location">
    <subcellularLocation>
        <location evidence="3">Cytoplasm</location>
    </subcellularLocation>
</comment>
<comment type="similarity">
    <text evidence="3">Belongs to the glycosyl hydrolase 32 family.</text>
</comment>
<proteinExistence type="inferred from homology"/>
<protein>
    <recommendedName>
        <fullName>Sucrose-6-phosphate hydrolase</fullName>
        <shortName>Sucrase</shortName>
        <ecNumber>3.2.1.26</ecNumber>
    </recommendedName>
    <alternativeName>
        <fullName>Invertase</fullName>
    </alternativeName>
</protein>
<name>SCRB_STRMU</name>
<gene>
    <name type="primary">scrB</name>
    <name type="ordered locus">SMU_1843</name>
</gene>
<accession>P13522</accession>
<reference key="1">
    <citation type="journal article" date="1988" name="Infect. Immun.">
        <title>Sequence analysis of the Streptococcus mutans scrB gene.</title>
        <authorList>
            <person name="Sato Y."/>
            <person name="Kuramitsu H.K."/>
        </authorList>
    </citation>
    <scope>NUCLEOTIDE SEQUENCE [GENOMIC DNA]</scope>
    <source>
        <strain>GS-5</strain>
    </source>
</reference>
<reference key="2">
    <citation type="journal article" date="2002" name="Proc. Natl. Acad. Sci. U.S.A.">
        <title>Genome sequence of Streptococcus mutans UA159, a cariogenic dental pathogen.</title>
        <authorList>
            <person name="Ajdic D.J."/>
            <person name="McShan W.M."/>
            <person name="McLaughlin R.E."/>
            <person name="Savic G."/>
            <person name="Chang J."/>
            <person name="Carson M.B."/>
            <person name="Primeaux C."/>
            <person name="Tian R."/>
            <person name="Kenton S."/>
            <person name="Jia H.G."/>
            <person name="Lin S.P."/>
            <person name="Qian Y."/>
            <person name="Li S."/>
            <person name="Zhu H."/>
            <person name="Najar F.Z."/>
            <person name="Lai H."/>
            <person name="White J."/>
            <person name="Roe B.A."/>
            <person name="Ferretti J.J."/>
        </authorList>
    </citation>
    <scope>NUCLEOTIDE SEQUENCE [LARGE SCALE GENOMIC DNA]</scope>
    <source>
        <strain>ATCC 700610 / UA159</strain>
    </source>
</reference>
<reference key="3">
    <citation type="journal article" date="1989" name="J. Bacteriol.">
        <title>Characterization and sequence analysis of the scrA gene encoding enzyme IIScr of the Streptococcus mutans phosphoenolpyruvate-dependent sucrose phosphotransferase system.</title>
        <authorList>
            <person name="Sato Y."/>
            <person name="Poy F."/>
            <person name="Jacobson G.R."/>
            <person name="Kuramitsu H.K."/>
        </authorList>
    </citation>
    <scope>NUCLEOTIDE SEQUENCE [GENOMIC DNA] OF 1-9</scope>
    <source>
        <strain>GS-5</strain>
    </source>
</reference>
<evidence type="ECO:0000250" key="1"/>
<evidence type="ECO:0000255" key="2">
    <source>
        <dbReference type="PROSITE-ProRule" id="PRU10067"/>
    </source>
</evidence>
<evidence type="ECO:0000305" key="3"/>
<keyword id="KW-0119">Carbohydrate metabolism</keyword>
<keyword id="KW-0963">Cytoplasm</keyword>
<keyword id="KW-0326">Glycosidase</keyword>
<keyword id="KW-0378">Hydrolase</keyword>
<keyword id="KW-1185">Reference proteome</keyword>